<comment type="subcellular location">
    <subcellularLocation>
        <location evidence="1">Cytoplasm</location>
    </subcellularLocation>
</comment>
<comment type="similarity">
    <text evidence="2">Belongs to the UPF0456 family.</text>
</comment>
<reference key="1">
    <citation type="submission" date="2004-08" db="EMBL/GenBank/DDBJ databases">
        <authorList>
            <consortium name="NIH - Xenopus Gene Collection (XGC) project"/>
        </authorList>
    </citation>
    <scope>NUCLEOTIDE SEQUENCE [LARGE SCALE MRNA]</scope>
    <source>
        <tissue>Eye</tissue>
    </source>
</reference>
<protein>
    <recommendedName>
        <fullName>Protein C10</fullName>
    </recommendedName>
</protein>
<keyword id="KW-0963">Cytoplasm</keyword>
<keyword id="KW-1185">Reference proteome</keyword>
<dbReference type="EMBL" id="BC079759">
    <property type="protein sequence ID" value="AAH79759.1"/>
    <property type="molecule type" value="mRNA"/>
</dbReference>
<dbReference type="RefSeq" id="NP_001087420.1">
    <property type="nucleotide sequence ID" value="NM_001093951.1"/>
</dbReference>
<dbReference type="SMR" id="Q6AX50"/>
<dbReference type="DNASU" id="447244"/>
<dbReference type="GeneID" id="447244"/>
<dbReference type="KEGG" id="xla:447244"/>
<dbReference type="AGR" id="Xenbase:XB-GENE-5797348"/>
<dbReference type="CTD" id="447244"/>
<dbReference type="Xenbase" id="XB-GENE-5797348">
    <property type="gene designation" value="c7h12orf57.L"/>
</dbReference>
<dbReference type="OMA" id="GNDMMKM"/>
<dbReference type="OrthoDB" id="75738at2759"/>
<dbReference type="Proteomes" id="UP000186698">
    <property type="component" value="Chromosome 7L"/>
</dbReference>
<dbReference type="Bgee" id="447244">
    <property type="expression patterns" value="Expressed in testis and 19 other cell types or tissues"/>
</dbReference>
<dbReference type="GO" id="GO:0005737">
    <property type="term" value="C:cytoplasm"/>
    <property type="evidence" value="ECO:0007669"/>
    <property type="project" value="UniProtKB-SubCell"/>
</dbReference>
<dbReference type="GO" id="GO:0009791">
    <property type="term" value="P:post-embryonic development"/>
    <property type="evidence" value="ECO:0000318"/>
    <property type="project" value="GO_Central"/>
</dbReference>
<dbReference type="InterPro" id="IPR026317">
    <property type="entry name" value="P_C10"/>
</dbReference>
<dbReference type="PANTHER" id="PTHR13463">
    <property type="entry name" value="PROTEIN C10"/>
    <property type="match status" value="1"/>
</dbReference>
<dbReference type="PANTHER" id="PTHR13463:SF3">
    <property type="entry name" value="PROTEIN C10"/>
    <property type="match status" value="1"/>
</dbReference>
<dbReference type="Pfam" id="PF14974">
    <property type="entry name" value="P_C10"/>
    <property type="match status" value="1"/>
</dbReference>
<accession>Q6AX50</accession>
<name>C10_XENLA</name>
<feature type="chain" id="PRO_0000294480" description="Protein C10">
    <location>
        <begin position="1"/>
        <end position="128"/>
    </location>
</feature>
<evidence type="ECO:0000250" key="1"/>
<evidence type="ECO:0000305" key="2"/>
<sequence length="128" mass="13597">MSSLQRTAPASQAVSLPLEQVKEALGEVLNALQSPTGSARLEEARENSGNDLGKVLQLLLPAAVQIQQEVLQNYGFSADGEGVLRFARLVKSYESQDPEIAAMSSKLKSFFLPPLPLPPHAGLSAPSS</sequence>
<proteinExistence type="evidence at transcript level"/>
<organism>
    <name type="scientific">Xenopus laevis</name>
    <name type="common">African clawed frog</name>
    <dbReference type="NCBI Taxonomy" id="8355"/>
    <lineage>
        <taxon>Eukaryota</taxon>
        <taxon>Metazoa</taxon>
        <taxon>Chordata</taxon>
        <taxon>Craniata</taxon>
        <taxon>Vertebrata</taxon>
        <taxon>Euteleostomi</taxon>
        <taxon>Amphibia</taxon>
        <taxon>Batrachia</taxon>
        <taxon>Anura</taxon>
        <taxon>Pipoidea</taxon>
        <taxon>Pipidae</taxon>
        <taxon>Xenopodinae</taxon>
        <taxon>Xenopus</taxon>
        <taxon>Xenopus</taxon>
    </lineage>
</organism>